<name>TSAD_ONYPE</name>
<gene>
    <name type="primary">tsaD</name>
    <name type="synonym">gcp</name>
    <name type="ordered locus">PAM_579</name>
</gene>
<organism>
    <name type="scientific">Onion yellows phytoplasma (strain OY-M)</name>
    <dbReference type="NCBI Taxonomy" id="262768"/>
    <lineage>
        <taxon>Bacteria</taxon>
        <taxon>Bacillati</taxon>
        <taxon>Mycoplasmatota</taxon>
        <taxon>Mollicutes</taxon>
        <taxon>Acholeplasmatales</taxon>
        <taxon>Acholeplasmataceae</taxon>
        <taxon>Candidatus Phytoplasma</taxon>
        <taxon>16SrI (Aster yellows group)</taxon>
    </lineage>
</organism>
<protein>
    <recommendedName>
        <fullName>tRNA N6-adenosine threonylcarbamoyltransferase</fullName>
        <ecNumber>2.3.1.234</ecNumber>
    </recommendedName>
    <alternativeName>
        <fullName>N6-L-threonylcarbamoyladenine synthase</fullName>
        <shortName>t(6)A synthase</shortName>
    </alternativeName>
    <alternativeName>
        <fullName>t(6)A37 threonylcarbamoyladenosine biosynthesis protein TsaD</fullName>
    </alternativeName>
    <alternativeName>
        <fullName>tRNA threonylcarbamoyladenosine biosynthesis protein TsaD</fullName>
    </alternativeName>
</protein>
<comment type="function">
    <text evidence="1">Required for the formation of a threonylcarbamoyl group on adenosine at position 37 (t(6)A37) in tRNAs that read codons beginning with adenine. Is involved in the transfer of the threonylcarbamoyl moiety of threonylcarbamoyl-AMP (TC-AMP) to the N6 group of A37, together with TsaE and TsaB. TsaD likely plays a direct catalytic role in this reaction (By similarity).</text>
</comment>
<comment type="catalytic activity">
    <reaction>
        <text>L-threonylcarbamoyladenylate + adenosine(37) in tRNA = N(6)-L-threonylcarbamoyladenosine(37) in tRNA + AMP + H(+)</text>
        <dbReference type="Rhea" id="RHEA:37059"/>
        <dbReference type="Rhea" id="RHEA-COMP:10162"/>
        <dbReference type="Rhea" id="RHEA-COMP:10163"/>
        <dbReference type="ChEBI" id="CHEBI:15378"/>
        <dbReference type="ChEBI" id="CHEBI:73682"/>
        <dbReference type="ChEBI" id="CHEBI:74411"/>
        <dbReference type="ChEBI" id="CHEBI:74418"/>
        <dbReference type="ChEBI" id="CHEBI:456215"/>
        <dbReference type="EC" id="2.3.1.234"/>
    </reaction>
</comment>
<comment type="cofactor">
    <cofactor evidence="1">
        <name>Fe(2+)</name>
        <dbReference type="ChEBI" id="CHEBI:29033"/>
    </cofactor>
    <text evidence="1">Binds 1 Fe(2+) ion per subunit.</text>
</comment>
<comment type="subcellular location">
    <subcellularLocation>
        <location evidence="1">Cytoplasm</location>
    </subcellularLocation>
</comment>
<comment type="similarity">
    <text evidence="2">Belongs to the KAE1 / TsaD family.</text>
</comment>
<accession>Q6YPZ6</accession>
<keyword id="KW-0012">Acyltransferase</keyword>
<keyword id="KW-0963">Cytoplasm</keyword>
<keyword id="KW-0408">Iron</keyword>
<keyword id="KW-0479">Metal-binding</keyword>
<keyword id="KW-0808">Transferase</keyword>
<keyword id="KW-0819">tRNA processing</keyword>
<dbReference type="EC" id="2.3.1.234"/>
<dbReference type="EMBL" id="AP006628">
    <property type="protein sequence ID" value="BAD04664.1"/>
    <property type="molecule type" value="Genomic_DNA"/>
</dbReference>
<dbReference type="SMR" id="Q6YPZ6"/>
<dbReference type="STRING" id="262768.PAM_579"/>
<dbReference type="KEGG" id="poy:PAM_579"/>
<dbReference type="eggNOG" id="COG0533">
    <property type="taxonomic scope" value="Bacteria"/>
</dbReference>
<dbReference type="HOGENOM" id="CLU_023208_0_1_14"/>
<dbReference type="BioCyc" id="OYEL262768:G1G26-702-MONOMER"/>
<dbReference type="Proteomes" id="UP000002523">
    <property type="component" value="Chromosome"/>
</dbReference>
<dbReference type="GO" id="GO:0005737">
    <property type="term" value="C:cytoplasm"/>
    <property type="evidence" value="ECO:0007669"/>
    <property type="project" value="UniProtKB-SubCell"/>
</dbReference>
<dbReference type="GO" id="GO:0046872">
    <property type="term" value="F:metal ion binding"/>
    <property type="evidence" value="ECO:0007669"/>
    <property type="project" value="UniProtKB-KW"/>
</dbReference>
<dbReference type="GO" id="GO:0061711">
    <property type="term" value="F:N(6)-L-threonylcarbamoyladenine synthase activity"/>
    <property type="evidence" value="ECO:0007669"/>
    <property type="project" value="UniProtKB-EC"/>
</dbReference>
<dbReference type="GO" id="GO:0002949">
    <property type="term" value="P:tRNA threonylcarbamoyladenosine modification"/>
    <property type="evidence" value="ECO:0007669"/>
    <property type="project" value="InterPro"/>
</dbReference>
<dbReference type="FunFam" id="3.30.420.40:FF:000012">
    <property type="entry name" value="tRNA N6-adenosine threonylcarbamoyltransferase"/>
    <property type="match status" value="1"/>
</dbReference>
<dbReference type="Gene3D" id="3.30.420.40">
    <property type="match status" value="2"/>
</dbReference>
<dbReference type="InterPro" id="IPR043129">
    <property type="entry name" value="ATPase_NBD"/>
</dbReference>
<dbReference type="InterPro" id="IPR000905">
    <property type="entry name" value="Gcp-like_dom"/>
</dbReference>
<dbReference type="InterPro" id="IPR017861">
    <property type="entry name" value="KAE1/TsaD"/>
</dbReference>
<dbReference type="InterPro" id="IPR022450">
    <property type="entry name" value="TsaD"/>
</dbReference>
<dbReference type="NCBIfam" id="TIGR00329">
    <property type="entry name" value="gcp_kae1"/>
    <property type="match status" value="1"/>
</dbReference>
<dbReference type="NCBIfam" id="TIGR03723">
    <property type="entry name" value="T6A_TsaD_YgjD"/>
    <property type="match status" value="1"/>
</dbReference>
<dbReference type="PANTHER" id="PTHR11735">
    <property type="entry name" value="TRNA N6-ADENOSINE THREONYLCARBAMOYLTRANSFERASE"/>
    <property type="match status" value="1"/>
</dbReference>
<dbReference type="PANTHER" id="PTHR11735:SF6">
    <property type="entry name" value="TRNA N6-ADENOSINE THREONYLCARBAMOYLTRANSFERASE, MITOCHONDRIAL"/>
    <property type="match status" value="1"/>
</dbReference>
<dbReference type="Pfam" id="PF00814">
    <property type="entry name" value="TsaD"/>
    <property type="match status" value="1"/>
</dbReference>
<dbReference type="PRINTS" id="PR00789">
    <property type="entry name" value="OSIALOPTASE"/>
</dbReference>
<dbReference type="SUPFAM" id="SSF53067">
    <property type="entry name" value="Actin-like ATPase domain"/>
    <property type="match status" value="2"/>
</dbReference>
<feature type="chain" id="PRO_0000303464" description="tRNA N6-adenosine threonylcarbamoyltransferase">
    <location>
        <begin position="1"/>
        <end position="233"/>
    </location>
</feature>
<feature type="binding site" evidence="1">
    <location>
        <position position="111"/>
    </location>
    <ligand>
        <name>Fe cation</name>
        <dbReference type="ChEBI" id="CHEBI:24875"/>
    </ligand>
</feature>
<feature type="binding site" evidence="1">
    <location>
        <position position="115"/>
    </location>
    <ligand>
        <name>Fe cation</name>
        <dbReference type="ChEBI" id="CHEBI:24875"/>
    </ligand>
</feature>
<feature type="binding site" evidence="1">
    <location>
        <begin position="133"/>
        <end position="137"/>
    </location>
    <ligand>
        <name>substrate</name>
    </ligand>
</feature>
<feature type="binding site" evidence="1">
    <location>
        <position position="166"/>
    </location>
    <ligand>
        <name>substrate</name>
    </ligand>
</feature>
<feature type="binding site" evidence="1">
    <location>
        <position position="179"/>
    </location>
    <ligand>
        <name>substrate</name>
    </ligand>
</feature>
<feature type="binding site" evidence="1">
    <location>
        <position position="183"/>
    </location>
    <ligand>
        <name>substrate</name>
    </ligand>
</feature>
<proteinExistence type="inferred from homology"/>
<reference key="1">
    <citation type="journal article" date="2004" name="Nat. Genet.">
        <title>Reductive evolution suggested from the complete genome sequence of a plant-pathogenic phytoplasma.</title>
        <authorList>
            <person name="Oshima K."/>
            <person name="Kakizawa S."/>
            <person name="Nishigawa H."/>
            <person name="Jung H.-Y."/>
            <person name="Wei W."/>
            <person name="Suzuki S."/>
            <person name="Arashida R."/>
            <person name="Nakata D."/>
            <person name="Miyata S."/>
            <person name="Ugaki M."/>
            <person name="Namba S."/>
        </authorList>
    </citation>
    <scope>NUCLEOTIDE SEQUENCE [LARGE SCALE GENOMIC DNA]</scope>
    <source>
        <strain>OY-M</strain>
    </source>
</reference>
<sequence>MNILSIETSCDETSCAVTQNGKKVLSNVVFSQIKDHQIFGGVVPEIASRKHIQFMTLVLQQALKEANLTPQEIDLVAVTQGPGLVGSLLVGINAANVFAYTYQKPLLGVNHLLGHIYSAQIEHEINFPALVLLVSGGHTDLFYLTDHLQIKPLGTTLDDAVGEVYDKIAKNLNLPYPGGPLIDQLAQQGKDTYHLVRPYLKNDNLNFSFSGLKSTLVNLVMKQNLKDINIPDL</sequence>
<evidence type="ECO:0000250" key="1"/>
<evidence type="ECO:0000305" key="2"/>